<comment type="function">
    <text evidence="1">Na(+)/H(+) antiporter that extrudes sodium in exchange for external protons.</text>
</comment>
<comment type="catalytic activity">
    <reaction evidence="1">
        <text>2 Na(+)(in) + 3 H(+)(out) = 2 Na(+)(out) + 3 H(+)(in)</text>
        <dbReference type="Rhea" id="RHEA:29247"/>
        <dbReference type="ChEBI" id="CHEBI:15378"/>
        <dbReference type="ChEBI" id="CHEBI:29101"/>
    </reaction>
    <physiologicalReaction direction="left-to-right" evidence="1">
        <dbReference type="Rhea" id="RHEA:29248"/>
    </physiologicalReaction>
</comment>
<comment type="subcellular location">
    <subcellularLocation>
        <location evidence="1">Cell inner membrane</location>
        <topology evidence="1">Multi-pass membrane protein</topology>
    </subcellularLocation>
</comment>
<comment type="similarity">
    <text evidence="1">Belongs to the NhaB Na(+)/H(+) (TC 2.A.34) antiporter family.</text>
</comment>
<name>NHAB_PHOPR</name>
<feature type="chain" id="PRO_0000333103" description="Na(+)/H(+) antiporter NhaB">
    <location>
        <begin position="1"/>
        <end position="530"/>
    </location>
</feature>
<feature type="transmembrane region" description="Helical" evidence="1">
    <location>
        <begin position="13"/>
        <end position="33"/>
    </location>
</feature>
<feature type="transmembrane region" description="Helical" evidence="1">
    <location>
        <begin position="34"/>
        <end position="54"/>
    </location>
</feature>
<feature type="transmembrane region" description="Helical" evidence="1">
    <location>
        <begin position="64"/>
        <end position="84"/>
    </location>
</feature>
<feature type="transmembrane region" description="Helical" evidence="1">
    <location>
        <begin position="90"/>
        <end position="110"/>
    </location>
</feature>
<feature type="transmembrane region" description="Helical" evidence="1">
    <location>
        <begin position="113"/>
        <end position="133"/>
    </location>
</feature>
<feature type="transmembrane region" description="Helical" evidence="1">
    <location>
        <begin position="136"/>
        <end position="156"/>
    </location>
</feature>
<feature type="transmembrane region" description="Helical" evidence="1">
    <location>
        <begin position="205"/>
        <end position="225"/>
    </location>
</feature>
<feature type="transmembrane region" description="Helical" evidence="1">
    <location>
        <begin position="234"/>
        <end position="254"/>
    </location>
</feature>
<feature type="transmembrane region" description="Helical" evidence="1">
    <location>
        <begin position="306"/>
        <end position="326"/>
    </location>
</feature>
<feature type="transmembrane region" description="Helical" evidence="1">
    <location>
        <begin position="351"/>
        <end position="371"/>
    </location>
</feature>
<feature type="transmembrane region" description="Helical" evidence="1">
    <location>
        <begin position="378"/>
        <end position="400"/>
    </location>
</feature>
<feature type="transmembrane region" description="Helical" evidence="1">
    <location>
        <begin position="450"/>
        <end position="470"/>
    </location>
</feature>
<feature type="transmembrane region" description="Helical" evidence="1">
    <location>
        <begin position="481"/>
        <end position="501"/>
    </location>
</feature>
<gene>
    <name evidence="1" type="primary">nhaB</name>
    <name type="ordered locus">PBPRA2609</name>
</gene>
<proteinExistence type="inferred from homology"/>
<sequence length="530" mass="58044">MAISLGNAFIKNFLGKAPDWYKITIISFLIINPFVFFLVDPFVAGWLLVVEFIFTLAMALKCYPLQPGGLLAIEAVAIGMTSPAQVKHELVANIEVLLLLIFMVAGIYFMKQLLLYIFTKILIGIRSKVLLSLSFCLMAAFLSAFLDALTVIAVVISVTVGFYSIYHKVASGQDPSTSHDHTTDTHVREVSRDDLENYRSFLRSLLMHAGIGTALGGVMTMVGEPQNLIIADQAGWLFGEFIIRMSPVTVPVFMCGLLTCTLVEKFQICGYGTLLPENVRRILVDYDDEERKNRTNIDYAKLTAQALIAVWLIVGLAMHLAAVGLIGLTVIIFATSFTGVTEEHALGKAFEEALPFTALLAVFFSIVAVIIDQHLFTPIISWVLTLNGNAQMTMFYIANGLLSMVSDNVFVGTVYINEVKAALVNGVITRDQFDMLAVAINTGTNLPSVATPNGQAAFLFVLTSALAPLIRLSYGRMVYMALPYTIVLALVGLAGIEFMLLPMTEWFYDMGWLVHNTSEVMSTIAPAAGH</sequence>
<accession>Q6LNY8</accession>
<protein>
    <recommendedName>
        <fullName evidence="1">Na(+)/H(+) antiporter NhaB</fullName>
    </recommendedName>
    <alternativeName>
        <fullName evidence="1">Sodium/proton antiporter NhaB</fullName>
    </alternativeName>
</protein>
<organism>
    <name type="scientific">Photobacterium profundum (strain SS9)</name>
    <dbReference type="NCBI Taxonomy" id="298386"/>
    <lineage>
        <taxon>Bacteria</taxon>
        <taxon>Pseudomonadati</taxon>
        <taxon>Pseudomonadota</taxon>
        <taxon>Gammaproteobacteria</taxon>
        <taxon>Vibrionales</taxon>
        <taxon>Vibrionaceae</taxon>
        <taxon>Photobacterium</taxon>
    </lineage>
</organism>
<evidence type="ECO:0000255" key="1">
    <source>
        <dbReference type="HAMAP-Rule" id="MF_01599"/>
    </source>
</evidence>
<dbReference type="EMBL" id="CR378671">
    <property type="protein sequence ID" value="CAG20988.1"/>
    <property type="molecule type" value="Genomic_DNA"/>
</dbReference>
<dbReference type="RefSeq" id="WP_011219267.1">
    <property type="nucleotide sequence ID" value="NC_006370.1"/>
</dbReference>
<dbReference type="SMR" id="Q6LNY8"/>
<dbReference type="STRING" id="298386.PBPRA2609"/>
<dbReference type="KEGG" id="ppr:PBPRA2609"/>
<dbReference type="eggNOG" id="COG3067">
    <property type="taxonomic scope" value="Bacteria"/>
</dbReference>
<dbReference type="HOGENOM" id="CLU_041110_0_0_6"/>
<dbReference type="Proteomes" id="UP000000593">
    <property type="component" value="Chromosome 1"/>
</dbReference>
<dbReference type="GO" id="GO:0005886">
    <property type="term" value="C:plasma membrane"/>
    <property type="evidence" value="ECO:0007669"/>
    <property type="project" value="UniProtKB-SubCell"/>
</dbReference>
<dbReference type="GO" id="GO:0015385">
    <property type="term" value="F:sodium:proton antiporter activity"/>
    <property type="evidence" value="ECO:0007669"/>
    <property type="project" value="InterPro"/>
</dbReference>
<dbReference type="HAMAP" id="MF_01599">
    <property type="entry name" value="NhaB"/>
    <property type="match status" value="1"/>
</dbReference>
<dbReference type="InterPro" id="IPR004671">
    <property type="entry name" value="Na+/H+_antiporter_NhaB"/>
</dbReference>
<dbReference type="NCBIfam" id="TIGR00774">
    <property type="entry name" value="NhaB"/>
    <property type="match status" value="1"/>
</dbReference>
<dbReference type="NCBIfam" id="NF007093">
    <property type="entry name" value="PRK09547.1"/>
    <property type="match status" value="1"/>
</dbReference>
<dbReference type="PANTHER" id="PTHR43302:SF1">
    <property type="entry name" value="NA(+)_H(+) ANTIPORTER NHAB"/>
    <property type="match status" value="1"/>
</dbReference>
<dbReference type="PANTHER" id="PTHR43302">
    <property type="entry name" value="TRANSPORTER ARSB-RELATED"/>
    <property type="match status" value="1"/>
</dbReference>
<dbReference type="Pfam" id="PF06450">
    <property type="entry name" value="NhaB"/>
    <property type="match status" value="1"/>
</dbReference>
<keyword id="KW-0050">Antiport</keyword>
<keyword id="KW-0997">Cell inner membrane</keyword>
<keyword id="KW-1003">Cell membrane</keyword>
<keyword id="KW-0406">Ion transport</keyword>
<keyword id="KW-0472">Membrane</keyword>
<keyword id="KW-1185">Reference proteome</keyword>
<keyword id="KW-0915">Sodium</keyword>
<keyword id="KW-0739">Sodium transport</keyword>
<keyword id="KW-0812">Transmembrane</keyword>
<keyword id="KW-1133">Transmembrane helix</keyword>
<keyword id="KW-0813">Transport</keyword>
<reference key="1">
    <citation type="journal article" date="2005" name="Science">
        <title>Life at depth: Photobacterium profundum genome sequence and expression analysis.</title>
        <authorList>
            <person name="Vezzi A."/>
            <person name="Campanaro S."/>
            <person name="D'Angelo M."/>
            <person name="Simonato F."/>
            <person name="Vitulo N."/>
            <person name="Lauro F.M."/>
            <person name="Cestaro A."/>
            <person name="Malacrida G."/>
            <person name="Simionati B."/>
            <person name="Cannata N."/>
            <person name="Romualdi C."/>
            <person name="Bartlett D.H."/>
            <person name="Valle G."/>
        </authorList>
    </citation>
    <scope>NUCLEOTIDE SEQUENCE [LARGE SCALE GENOMIC DNA]</scope>
    <source>
        <strain>ATCC BAA-1253 / SS9</strain>
    </source>
</reference>